<feature type="signal peptide" evidence="1">
    <location>
        <begin position="1"/>
        <end position="33"/>
    </location>
</feature>
<feature type="chain" id="PRO_0000041790" description="Flagellar P-ring protein">
    <location>
        <begin position="34"/>
        <end position="389"/>
    </location>
</feature>
<organism>
    <name type="scientific">Burkholderia pseudomallei (strain K96243)</name>
    <dbReference type="NCBI Taxonomy" id="272560"/>
    <lineage>
        <taxon>Bacteria</taxon>
        <taxon>Pseudomonadati</taxon>
        <taxon>Pseudomonadota</taxon>
        <taxon>Betaproteobacteria</taxon>
        <taxon>Burkholderiales</taxon>
        <taxon>Burkholderiaceae</taxon>
        <taxon>Burkholderia</taxon>
        <taxon>pseudomallei group</taxon>
    </lineage>
</organism>
<accession>Q63YB1</accession>
<keyword id="KW-0975">Bacterial flagellum</keyword>
<keyword id="KW-0574">Periplasm</keyword>
<keyword id="KW-1185">Reference proteome</keyword>
<keyword id="KW-0732">Signal</keyword>
<dbReference type="EMBL" id="BX571965">
    <property type="protein sequence ID" value="CAH34265.1"/>
    <property type="status" value="ALT_INIT"/>
    <property type="molecule type" value="Genomic_DNA"/>
</dbReference>
<dbReference type="SMR" id="Q63YB1"/>
<dbReference type="STRING" id="272560.BPSL0277"/>
<dbReference type="KEGG" id="bps:BPSL0277"/>
<dbReference type="eggNOG" id="COG1706">
    <property type="taxonomic scope" value="Bacteria"/>
</dbReference>
<dbReference type="Proteomes" id="UP000000605">
    <property type="component" value="Chromosome 1"/>
</dbReference>
<dbReference type="GO" id="GO:0009428">
    <property type="term" value="C:bacterial-type flagellum basal body, distal rod, P ring"/>
    <property type="evidence" value="ECO:0007669"/>
    <property type="project" value="InterPro"/>
</dbReference>
<dbReference type="GO" id="GO:0030288">
    <property type="term" value="C:outer membrane-bounded periplasmic space"/>
    <property type="evidence" value="ECO:0007669"/>
    <property type="project" value="InterPro"/>
</dbReference>
<dbReference type="GO" id="GO:0005198">
    <property type="term" value="F:structural molecule activity"/>
    <property type="evidence" value="ECO:0007669"/>
    <property type="project" value="InterPro"/>
</dbReference>
<dbReference type="GO" id="GO:0071973">
    <property type="term" value="P:bacterial-type flagellum-dependent cell motility"/>
    <property type="evidence" value="ECO:0007669"/>
    <property type="project" value="InterPro"/>
</dbReference>
<dbReference type="HAMAP" id="MF_00416">
    <property type="entry name" value="FlgI"/>
    <property type="match status" value="1"/>
</dbReference>
<dbReference type="InterPro" id="IPR001782">
    <property type="entry name" value="Flag_FlgI"/>
</dbReference>
<dbReference type="NCBIfam" id="NF003676">
    <property type="entry name" value="PRK05303.1"/>
    <property type="match status" value="1"/>
</dbReference>
<dbReference type="PANTHER" id="PTHR30381">
    <property type="entry name" value="FLAGELLAR P-RING PERIPLASMIC PROTEIN FLGI"/>
    <property type="match status" value="1"/>
</dbReference>
<dbReference type="PANTHER" id="PTHR30381:SF0">
    <property type="entry name" value="FLAGELLAR P-RING PROTEIN"/>
    <property type="match status" value="1"/>
</dbReference>
<dbReference type="Pfam" id="PF02119">
    <property type="entry name" value="FlgI"/>
    <property type="match status" value="1"/>
</dbReference>
<dbReference type="PRINTS" id="PR01010">
    <property type="entry name" value="FLGPRINGFLGI"/>
</dbReference>
<reference key="1">
    <citation type="journal article" date="2004" name="Proc. Natl. Acad. Sci. U.S.A.">
        <title>Genomic plasticity of the causative agent of melioidosis, Burkholderia pseudomallei.</title>
        <authorList>
            <person name="Holden M.T.G."/>
            <person name="Titball R.W."/>
            <person name="Peacock S.J."/>
            <person name="Cerdeno-Tarraga A.-M."/>
            <person name="Atkins T."/>
            <person name="Crossman L.C."/>
            <person name="Pitt T."/>
            <person name="Churcher C."/>
            <person name="Mungall K.L."/>
            <person name="Bentley S.D."/>
            <person name="Sebaihia M."/>
            <person name="Thomson N.R."/>
            <person name="Bason N."/>
            <person name="Beacham I.R."/>
            <person name="Brooks K."/>
            <person name="Brown K.A."/>
            <person name="Brown N.F."/>
            <person name="Challis G.L."/>
            <person name="Cherevach I."/>
            <person name="Chillingworth T."/>
            <person name="Cronin A."/>
            <person name="Crossett B."/>
            <person name="Davis P."/>
            <person name="DeShazer D."/>
            <person name="Feltwell T."/>
            <person name="Fraser A."/>
            <person name="Hance Z."/>
            <person name="Hauser H."/>
            <person name="Holroyd S."/>
            <person name="Jagels K."/>
            <person name="Keith K.E."/>
            <person name="Maddison M."/>
            <person name="Moule S."/>
            <person name="Price C."/>
            <person name="Quail M.A."/>
            <person name="Rabbinowitsch E."/>
            <person name="Rutherford K."/>
            <person name="Sanders M."/>
            <person name="Simmonds M."/>
            <person name="Songsivilai S."/>
            <person name="Stevens K."/>
            <person name="Tumapa S."/>
            <person name="Vesaratchavest M."/>
            <person name="Whitehead S."/>
            <person name="Yeats C."/>
            <person name="Barrell B.G."/>
            <person name="Oyston P.C.F."/>
            <person name="Parkhill J."/>
        </authorList>
    </citation>
    <scope>NUCLEOTIDE SEQUENCE [LARGE SCALE GENOMIC DNA]</scope>
    <source>
        <strain>K96243</strain>
    </source>
</reference>
<sequence length="389" mass="39623">MRPLVAARRRAAACCALAACMLALAFAPAAARAERLKDLAQIQGVRDNPLIGYGLVVGLDGTGDQTMQTPFTTQTLANMLANLGISINNGSANGGGSSAMTNMQLKNVAAVMVTATLPPFARPGEAIDVTVSSLGNAKSLRGGTLLLTPLKGADGQVYALAQGNMAVGGAGASANGSRVQVNQLAAGRIAGGAIVERSVPNAVAQMNGVLQLQLNDMDYGTAQRIVSAVNSSFGAGTATALDGRTIQLTAPADSAQQVAFMARLQNLEVSPERAAAKVILNARTGSIVMNQMVTLQNCAVAHGNLSVVVNTQPVVSQPGPFSNGQTVVAQQSQIQLKQDNGSLRMVTAGANLADVVKALNSLGATPADLMSILQAMKAAGALRADLEII</sequence>
<protein>
    <recommendedName>
        <fullName evidence="1">Flagellar P-ring protein</fullName>
    </recommendedName>
    <alternativeName>
        <fullName evidence="1">Basal body P-ring protein</fullName>
    </alternativeName>
</protein>
<proteinExistence type="inferred from homology"/>
<evidence type="ECO:0000255" key="1">
    <source>
        <dbReference type="HAMAP-Rule" id="MF_00416"/>
    </source>
</evidence>
<evidence type="ECO:0000305" key="2"/>
<comment type="function">
    <text evidence="1">Assembles around the rod to form the L-ring and probably protects the motor/basal body from shearing forces during rotation.</text>
</comment>
<comment type="subunit">
    <text evidence="1">The basal body constitutes a major portion of the flagellar organelle and consists of four rings (L,P,S, and M) mounted on a central rod.</text>
</comment>
<comment type="subcellular location">
    <subcellularLocation>
        <location evidence="1">Periplasm</location>
    </subcellularLocation>
    <subcellularLocation>
        <location evidence="1">Bacterial flagellum basal body</location>
    </subcellularLocation>
</comment>
<comment type="similarity">
    <text evidence="1">Belongs to the FlgI family.</text>
</comment>
<comment type="sequence caution" evidence="2">
    <conflict type="erroneous initiation">
        <sequence resource="EMBL-CDS" id="CAH34265"/>
    </conflict>
</comment>
<gene>
    <name evidence="1" type="primary">flgI</name>
    <name type="ordered locus">BPSL0277</name>
</gene>
<name>FLGI_BURPS</name>